<reference key="1">
    <citation type="journal article" date="1996" name="J. Bacteriol.">
        <title>The NADP+-isocitrate dehydrogenase gene (icd) is nitrogen regulated in cyanobacteria.</title>
        <authorList>
            <person name="Muro-Pastor M.I."/>
            <person name="Reyes J.C."/>
            <person name="Florencio F.J."/>
        </authorList>
    </citation>
    <scope>NUCLEOTIDE SEQUENCE [GENOMIC DNA]</scope>
    <scope>INDUCTION</scope>
    <scope>DISRUPTION PHENOTYPE</scope>
    <source>
        <strain>ATCC 27184 / PCC 6803 / Kazusa</strain>
    </source>
</reference>
<reference key="2">
    <citation type="journal article" date="1996" name="DNA Res.">
        <title>Sequence analysis of the genome of the unicellular cyanobacterium Synechocystis sp. strain PCC6803. II. Sequence determination of the entire genome and assignment of potential protein-coding regions.</title>
        <authorList>
            <person name="Kaneko T."/>
            <person name="Sato S."/>
            <person name="Kotani H."/>
            <person name="Tanaka A."/>
            <person name="Asamizu E."/>
            <person name="Nakamura Y."/>
            <person name="Miyajima N."/>
            <person name="Hirosawa M."/>
            <person name="Sugiura M."/>
            <person name="Sasamoto S."/>
            <person name="Kimura T."/>
            <person name="Hosouchi T."/>
            <person name="Matsuno A."/>
            <person name="Muraki A."/>
            <person name="Nakazaki N."/>
            <person name="Naruo K."/>
            <person name="Okumura S."/>
            <person name="Shimpo S."/>
            <person name="Takeuchi C."/>
            <person name="Wada T."/>
            <person name="Watanabe A."/>
            <person name="Yamada M."/>
            <person name="Yasuda M."/>
            <person name="Tabata S."/>
        </authorList>
    </citation>
    <scope>NUCLEOTIDE SEQUENCE [LARGE SCALE GENOMIC DNA]</scope>
    <source>
        <strain>ATCC 27184 / PCC 6803 / Kazusa</strain>
    </source>
</reference>
<reference key="3">
    <citation type="journal article" date="1992" name="Eur. J. Biochem.">
        <title>Purification and properties of NADP-isocitrate dehydrogenase from the unicellular cyanobacterium Synechocystis sp. PCC 6803.</title>
        <authorList>
            <person name="Muro-Pastor M.I."/>
            <person name="Florencio F.J."/>
        </authorList>
    </citation>
    <scope>PROTEIN SEQUENCE OF 1-20</scope>
    <scope>FUNCTION</scope>
    <scope>CATALYTIC ACTIVITY</scope>
    <scope>COFACTOR</scope>
    <scope>ACTIVITY REGULATION</scope>
    <scope>BIOPHYSICOCHEMICAL PROPERTIES</scope>
    <scope>SUBUNIT</scope>
    <source>
        <strain>ATCC 27184 / PCC 6803 / Kazusa</strain>
    </source>
</reference>
<gene>
    <name evidence="5" type="primary">icd</name>
    <name type="ordered locus">slr1289</name>
</gene>
<evidence type="ECO:0000250" key="1">
    <source>
        <dbReference type="UniProtKB" id="P08200"/>
    </source>
</evidence>
<evidence type="ECO:0000269" key="2">
    <source>
    </source>
</evidence>
<evidence type="ECO:0000269" key="3">
    <source>
    </source>
</evidence>
<evidence type="ECO:0000303" key="4">
    <source>
    </source>
</evidence>
<evidence type="ECO:0000303" key="5">
    <source>
    </source>
</evidence>
<evidence type="ECO:0000305" key="6"/>
<comment type="function">
    <text evidence="2">Catalyzes the oxidative decarboxylation of isocitrate to 2-oxoglutarate and carbon dioxide with the concomitant reduction of NADP(+) (PubMed:1730247). Is specific for NADP(+), cannot use NAD(+) (PubMed:1730247).</text>
</comment>
<comment type="catalytic activity">
    <reaction evidence="2">
        <text>D-threo-isocitrate + NADP(+) = 2-oxoglutarate + CO2 + NADPH</text>
        <dbReference type="Rhea" id="RHEA:19629"/>
        <dbReference type="ChEBI" id="CHEBI:15562"/>
        <dbReference type="ChEBI" id="CHEBI:16526"/>
        <dbReference type="ChEBI" id="CHEBI:16810"/>
        <dbReference type="ChEBI" id="CHEBI:57783"/>
        <dbReference type="ChEBI" id="CHEBI:58349"/>
        <dbReference type="EC" id="1.1.1.42"/>
    </reaction>
</comment>
<comment type="cofactor">
    <cofactor evidence="2">
        <name>Mg(2+)</name>
        <dbReference type="ChEBI" id="CHEBI:18420"/>
    </cofactor>
    <cofactor evidence="2">
        <name>Mn(2+)</name>
        <dbReference type="ChEBI" id="CHEBI:29035"/>
    </cofactor>
    <text evidence="1 2">Binds 1 Mg(2+) or Mn(2+) ion per subunit (By similarity). Can use Mn(2+) or Mg(2+), but the activity is twofold higher in vitro with Mn(2+) (PubMed:1730247).</text>
</comment>
<comment type="activity regulation">
    <text evidence="2">Inhibited non-competitively by ADP and 2-oxoglutarate, with respect to isocitrate and in a competitive manner by NADPH.</text>
</comment>
<comment type="biophysicochemical properties">
    <kinetics>
        <KM evidence="2">59 uM for D,L-isocitrate (in the presence of Mg(2+))</KM>
        <KM evidence="2">5.7 uM for D,L-isocitrate (in the presence of Mn(2+))</KM>
        <KM evidence="2">12 uM for NADP(+) (in the presence of Mg(2+))</KM>
        <KM evidence="2">6 uM for NADP(+) (in the presence of Mn(2+))</KM>
        <KM evidence="2">125 uM for Mg(2+)</KM>
        <KM evidence="2">4 uM for Mn(2+)</KM>
    </kinetics>
    <phDependence>
        <text evidence="2">Optimum pH is 9.0 (PubMed:1730247). Active over a relatively broad pH range (7.5-10.0) (PubMed:1730247).</text>
    </phDependence>
    <temperatureDependence>
        <text evidence="2">Activity increases with temperature up to 70 degrees Celsius, although activity declines after a few minutes at this temperature.</text>
    </temperatureDependence>
</comment>
<comment type="subunit">
    <text evidence="2">Homodimer.</text>
</comment>
<comment type="subcellular location">
    <subcellularLocation>
        <location>Cytoplasm</location>
    </subcellularLocation>
</comment>
<comment type="induction">
    <text evidence="3">Induced by nitrogen starvation (PubMed:8763933). Expression is regulated by the transcription factor NtcA, a positive regulator of genes subjected to nitrogen control in cyanobacteria (PubMed:8763933).</text>
</comment>
<comment type="disruption phenotype">
    <text evidence="3">Essential, it cannot be deleted.</text>
</comment>
<comment type="similarity">
    <text evidence="6">Belongs to the isocitrate and isopropylmalate dehydrogenases family.</text>
</comment>
<name>IDH_SYNY3</name>
<proteinExistence type="evidence at protein level"/>
<keyword id="KW-0963">Cytoplasm</keyword>
<keyword id="KW-0903">Direct protein sequencing</keyword>
<keyword id="KW-0329">Glyoxylate bypass</keyword>
<keyword id="KW-0460">Magnesium</keyword>
<keyword id="KW-0464">Manganese</keyword>
<keyword id="KW-0479">Metal-binding</keyword>
<keyword id="KW-0521">NADP</keyword>
<keyword id="KW-0560">Oxidoreductase</keyword>
<keyword id="KW-1185">Reference proteome</keyword>
<keyword id="KW-0816">Tricarboxylic acid cycle</keyword>
<protein>
    <recommendedName>
        <fullName evidence="4">Isocitrate dehydrogenase [NADP]</fullName>
        <shortName evidence="4">IDH</shortName>
        <ecNumber evidence="2">1.1.1.42</ecNumber>
    </recommendedName>
    <alternativeName>
        <fullName>IDP</fullName>
    </alternativeName>
    <alternativeName>
        <fullName evidence="4">NADP isocitrate dehydrogenase</fullName>
        <shortName evidence="5">NADP-IDH</shortName>
    </alternativeName>
    <alternativeName>
        <fullName>NADP(+)-specific ICDH</fullName>
    </alternativeName>
    <alternativeName>
        <fullName>Oxalosuccinate decarboxylase</fullName>
    </alternativeName>
</protein>
<dbReference type="EC" id="1.1.1.42" evidence="2"/>
<dbReference type="EMBL" id="X83563">
    <property type="protein sequence ID" value="CAA58549.1"/>
    <property type="molecule type" value="Genomic_DNA"/>
</dbReference>
<dbReference type="EMBL" id="BA000022">
    <property type="protein sequence ID" value="BAA16835.1"/>
    <property type="molecule type" value="Genomic_DNA"/>
</dbReference>
<dbReference type="PIR" id="S74684">
    <property type="entry name" value="S74684"/>
</dbReference>
<dbReference type="SMR" id="P80046"/>
<dbReference type="FunCoup" id="P80046">
    <property type="interactions" value="312"/>
</dbReference>
<dbReference type="IntAct" id="P80046">
    <property type="interactions" value="2"/>
</dbReference>
<dbReference type="STRING" id="1148.gene:10497693"/>
<dbReference type="PaxDb" id="1148-1651909"/>
<dbReference type="EnsemblBacteria" id="BAA16835">
    <property type="protein sequence ID" value="BAA16835"/>
    <property type="gene ID" value="BAA16835"/>
</dbReference>
<dbReference type="KEGG" id="syn:slr1289"/>
<dbReference type="eggNOG" id="COG0538">
    <property type="taxonomic scope" value="Bacteria"/>
</dbReference>
<dbReference type="InParanoid" id="P80046"/>
<dbReference type="PhylomeDB" id="P80046"/>
<dbReference type="Proteomes" id="UP000001425">
    <property type="component" value="Chromosome"/>
</dbReference>
<dbReference type="GO" id="GO:0005737">
    <property type="term" value="C:cytoplasm"/>
    <property type="evidence" value="ECO:0007669"/>
    <property type="project" value="UniProtKB-SubCell"/>
</dbReference>
<dbReference type="GO" id="GO:0004450">
    <property type="term" value="F:isocitrate dehydrogenase (NADP+) activity"/>
    <property type="evidence" value="ECO:0007669"/>
    <property type="project" value="UniProtKB-EC"/>
</dbReference>
<dbReference type="GO" id="GO:0000287">
    <property type="term" value="F:magnesium ion binding"/>
    <property type="evidence" value="ECO:0007669"/>
    <property type="project" value="InterPro"/>
</dbReference>
<dbReference type="GO" id="GO:0051287">
    <property type="term" value="F:NAD binding"/>
    <property type="evidence" value="ECO:0007669"/>
    <property type="project" value="InterPro"/>
</dbReference>
<dbReference type="GO" id="GO:0006097">
    <property type="term" value="P:glyoxylate cycle"/>
    <property type="evidence" value="ECO:0007669"/>
    <property type="project" value="UniProtKB-KW"/>
</dbReference>
<dbReference type="GO" id="GO:0006099">
    <property type="term" value="P:tricarboxylic acid cycle"/>
    <property type="evidence" value="ECO:0007669"/>
    <property type="project" value="UniProtKB-KW"/>
</dbReference>
<dbReference type="Gene3D" id="3.40.718.10">
    <property type="entry name" value="Isopropylmalate Dehydrogenase"/>
    <property type="match status" value="2"/>
</dbReference>
<dbReference type="InterPro" id="IPR019818">
    <property type="entry name" value="IsoCit/isopropylmalate_DH_CS"/>
</dbReference>
<dbReference type="InterPro" id="IPR004439">
    <property type="entry name" value="Isocitrate_DH_NADP_dimer_prok"/>
</dbReference>
<dbReference type="InterPro" id="IPR024084">
    <property type="entry name" value="IsoPropMal-DH-like_dom"/>
</dbReference>
<dbReference type="NCBIfam" id="NF005425">
    <property type="entry name" value="PRK07006.1"/>
    <property type="match status" value="1"/>
</dbReference>
<dbReference type="NCBIfam" id="NF005610">
    <property type="entry name" value="PRK07362.1"/>
    <property type="match status" value="1"/>
</dbReference>
<dbReference type="NCBIfam" id="TIGR00183">
    <property type="entry name" value="prok_nadp_idh"/>
    <property type="match status" value="1"/>
</dbReference>
<dbReference type="PANTHER" id="PTHR43504">
    <property type="entry name" value="ISOCITRATE DEHYDROGENASE [NADP]"/>
    <property type="match status" value="1"/>
</dbReference>
<dbReference type="PANTHER" id="PTHR43504:SF1">
    <property type="entry name" value="ISOCITRATE DEHYDROGENASE [NADP]"/>
    <property type="match status" value="1"/>
</dbReference>
<dbReference type="Pfam" id="PF00180">
    <property type="entry name" value="Iso_dh"/>
    <property type="match status" value="1"/>
</dbReference>
<dbReference type="SMART" id="SM01329">
    <property type="entry name" value="Iso_dh"/>
    <property type="match status" value="1"/>
</dbReference>
<dbReference type="SUPFAM" id="SSF53659">
    <property type="entry name" value="Isocitrate/Isopropylmalate dehydrogenase-like"/>
    <property type="match status" value="1"/>
</dbReference>
<dbReference type="PROSITE" id="PS00470">
    <property type="entry name" value="IDH_IMDH"/>
    <property type="match status" value="1"/>
</dbReference>
<sequence>MYEKLQPPSVGSKITFVAGKPVVPNDPIIPYIRGDGTGVDIWPATELVINAAIAKAYGGREEINWFKVYAGDEACELYGTYQIFPEDTLTAIKEYGVAIKGPLTTPVGGGIRSLNVALRQIFDLYTCVRPCRYYPGTPSPHKTPEKLDIIVYRENTEDIYLGIEWAEGTEGAKKLIAYLNDELIPTTPALGKKQIRLDSGIGIKPISKTGSQRLVRRAILHAKRLPKAKQMVTLVHKGNIMKFTEGPFRDWGYELATTEFRAECVTERESWICGNKESNPDLTIEANAHMIDPGYDTLTEEKQAVIKQEVEQVLNSIWESHGNGQWKEKVMVNDRIADSIFQQIQTRPDEYSILATMNLNGDYLSDAAAAVVGGLGMGPGANIGDSAAIFEATHGTAPKHAGLDRINPGSVILSGVMMLEFMGWQEAADLIKKGIGAAIANREVTYDLARLMEPKVDKPLKCSEFAQAIVSHFDD</sequence>
<organism>
    <name type="scientific">Synechocystis sp. (strain ATCC 27184 / PCC 6803 / Kazusa)</name>
    <dbReference type="NCBI Taxonomy" id="1111708"/>
    <lineage>
        <taxon>Bacteria</taxon>
        <taxon>Bacillati</taxon>
        <taxon>Cyanobacteriota</taxon>
        <taxon>Cyanophyceae</taxon>
        <taxon>Synechococcales</taxon>
        <taxon>Merismopediaceae</taxon>
        <taxon>Synechocystis</taxon>
    </lineage>
</organism>
<feature type="chain" id="PRO_0000083570" description="Isocitrate dehydrogenase [NADP]">
    <location>
        <begin position="1"/>
        <end position="475"/>
    </location>
</feature>
<feature type="binding site" evidence="1">
    <location>
        <position position="104"/>
    </location>
    <ligand>
        <name>NADP(+)</name>
        <dbReference type="ChEBI" id="CHEBI:58349"/>
    </ligand>
</feature>
<feature type="binding site" evidence="1">
    <location>
        <position position="113"/>
    </location>
    <ligand>
        <name>D-threo-isocitrate</name>
        <dbReference type="ChEBI" id="CHEBI:15562"/>
    </ligand>
</feature>
<feature type="binding site" evidence="1">
    <location>
        <position position="115"/>
    </location>
    <ligand>
        <name>D-threo-isocitrate</name>
        <dbReference type="ChEBI" id="CHEBI:15562"/>
    </ligand>
</feature>
<feature type="binding site" evidence="1">
    <location>
        <position position="119"/>
    </location>
    <ligand>
        <name>D-threo-isocitrate</name>
        <dbReference type="ChEBI" id="CHEBI:15562"/>
    </ligand>
</feature>
<feature type="binding site" evidence="1">
    <location>
        <position position="129"/>
    </location>
    <ligand>
        <name>D-threo-isocitrate</name>
        <dbReference type="ChEBI" id="CHEBI:15562"/>
    </ligand>
</feature>
<feature type="binding site" evidence="1">
    <location>
        <position position="153"/>
    </location>
    <ligand>
        <name>D-threo-isocitrate</name>
        <dbReference type="ChEBI" id="CHEBI:15562"/>
    </ligand>
</feature>
<feature type="binding site" evidence="1">
    <location>
        <position position="362"/>
    </location>
    <ligand>
        <name>Mg(2+)</name>
        <dbReference type="ChEBI" id="CHEBI:18420"/>
    </ligand>
</feature>
<feature type="binding site" evidence="1">
    <location>
        <begin position="394"/>
        <end position="400"/>
    </location>
    <ligand>
        <name>NADP(+)</name>
        <dbReference type="ChEBI" id="CHEBI:58349"/>
    </ligand>
</feature>
<feature type="binding site" evidence="1">
    <location>
        <position position="407"/>
    </location>
    <ligand>
        <name>NADP(+)</name>
        <dbReference type="ChEBI" id="CHEBI:58349"/>
    </ligand>
</feature>
<feature type="binding site" evidence="1">
    <location>
        <position position="446"/>
    </location>
    <ligand>
        <name>NADP(+)</name>
        <dbReference type="ChEBI" id="CHEBI:58349"/>
    </ligand>
</feature>
<feature type="binding site" evidence="1">
    <location>
        <position position="450"/>
    </location>
    <ligand>
        <name>NADP(+)</name>
        <dbReference type="ChEBI" id="CHEBI:58349"/>
    </ligand>
</feature>
<feature type="site" description="Critical for catalysis" evidence="1">
    <location>
        <position position="160"/>
    </location>
</feature>
<feature type="site" description="Critical for catalysis" evidence="1">
    <location>
        <position position="237"/>
    </location>
</feature>
<feature type="sequence conflict" description="In Ref. 2; BAA16835." evidence="6" ref="2">
    <original>REE</original>
    <variation>ERK</variation>
    <location>
        <begin position="60"/>
        <end position="62"/>
    </location>
</feature>
<feature type="sequence conflict" description="In Ref. 2; BAA16835." evidence="6" ref="2">
    <original>IF</original>
    <variation>YL</variation>
    <location>
        <begin position="83"/>
        <end position="84"/>
    </location>
</feature>
<feature type="sequence conflict" description="In Ref. 2; BAA16835." evidence="6" ref="2">
    <original>K</original>
    <variation>L</variation>
    <location>
        <position position="223"/>
    </location>
</feature>
<feature type="sequence conflict" description="In Ref. 2; BAA16835." evidence="6" ref="2">
    <original>P</original>
    <variation>A</variation>
    <location>
        <position position="247"/>
    </location>
</feature>
<feature type="sequence conflict" description="In Ref. 2; BAA16835." evidence="6" ref="2">
    <original>C</original>
    <variation>L</variation>
    <location>
        <position position="273"/>
    </location>
</feature>
<accession>P80046</accession>
<accession>P72820</accession>